<proteinExistence type="evidence at transcript level"/>
<gene>
    <name type="primary">TUBB8</name>
    <name type="synonym">TUB8</name>
    <name type="ordered locus">At5g23860</name>
    <name type="ORF">MRO11.10</name>
</gene>
<dbReference type="EMBL" id="M84705">
    <property type="protein sequence ID" value="AAA32886.1"/>
    <property type="molecule type" value="Genomic_DNA"/>
</dbReference>
<dbReference type="EMBL" id="AB005244">
    <property type="protein sequence ID" value="BAB10059.1"/>
    <property type="molecule type" value="Genomic_DNA"/>
</dbReference>
<dbReference type="EMBL" id="CP002688">
    <property type="protein sequence ID" value="AED93223.1"/>
    <property type="molecule type" value="Genomic_DNA"/>
</dbReference>
<dbReference type="EMBL" id="CP002688">
    <property type="protein sequence ID" value="AED93224.1"/>
    <property type="molecule type" value="Genomic_DNA"/>
</dbReference>
<dbReference type="EMBL" id="AY054693">
    <property type="protein sequence ID" value="AAK96884.1"/>
    <property type="molecule type" value="mRNA"/>
</dbReference>
<dbReference type="EMBL" id="AY081473">
    <property type="protein sequence ID" value="AAM10035.1"/>
    <property type="molecule type" value="mRNA"/>
</dbReference>
<dbReference type="PIR" id="JQ1592">
    <property type="entry name" value="JQ1592"/>
</dbReference>
<dbReference type="RefSeq" id="NP_001190373.1">
    <property type="nucleotide sequence ID" value="NM_001203444.1"/>
</dbReference>
<dbReference type="RefSeq" id="NP_568437.1">
    <property type="nucleotide sequence ID" value="NM_122291.4"/>
</dbReference>
<dbReference type="SMR" id="P29516"/>
<dbReference type="BioGRID" id="17726">
    <property type="interactions" value="8"/>
</dbReference>
<dbReference type="FunCoup" id="P29516">
    <property type="interactions" value="2077"/>
</dbReference>
<dbReference type="IntAct" id="P29516">
    <property type="interactions" value="2"/>
</dbReference>
<dbReference type="STRING" id="3702.P29516"/>
<dbReference type="MetOSite" id="P29516"/>
<dbReference type="PaxDb" id="3702-AT5G23860.1"/>
<dbReference type="ProteomicsDB" id="234183"/>
<dbReference type="EnsemblPlants" id="AT5G23860.1">
    <property type="protein sequence ID" value="AT5G23860.1"/>
    <property type="gene ID" value="AT5G23860"/>
</dbReference>
<dbReference type="EnsemblPlants" id="AT5G23860.2">
    <property type="protein sequence ID" value="AT5G23860.2"/>
    <property type="gene ID" value="AT5G23860"/>
</dbReference>
<dbReference type="GeneID" id="832451"/>
<dbReference type="Gramene" id="AT5G23860.1">
    <property type="protein sequence ID" value="AT5G23860.1"/>
    <property type="gene ID" value="AT5G23860"/>
</dbReference>
<dbReference type="Gramene" id="AT5G23860.2">
    <property type="protein sequence ID" value="AT5G23860.2"/>
    <property type="gene ID" value="AT5G23860"/>
</dbReference>
<dbReference type="KEGG" id="ath:AT5G23860"/>
<dbReference type="Araport" id="AT5G23860"/>
<dbReference type="TAIR" id="AT5G23860">
    <property type="gene designation" value="TUB8"/>
</dbReference>
<dbReference type="eggNOG" id="KOG1375">
    <property type="taxonomic scope" value="Eukaryota"/>
</dbReference>
<dbReference type="HOGENOM" id="CLU_015718_1_1_1"/>
<dbReference type="InParanoid" id="P29516"/>
<dbReference type="OMA" id="WVPRSVN"/>
<dbReference type="OrthoDB" id="1662883at2759"/>
<dbReference type="PhylomeDB" id="P29516"/>
<dbReference type="PRO" id="PR:P29516"/>
<dbReference type="Proteomes" id="UP000006548">
    <property type="component" value="Chromosome 5"/>
</dbReference>
<dbReference type="ExpressionAtlas" id="P29516">
    <property type="expression patterns" value="baseline and differential"/>
</dbReference>
<dbReference type="GO" id="GO:0005829">
    <property type="term" value="C:cytosol"/>
    <property type="evidence" value="ECO:0007005"/>
    <property type="project" value="TAIR"/>
</dbReference>
<dbReference type="GO" id="GO:0005794">
    <property type="term" value="C:Golgi apparatus"/>
    <property type="evidence" value="ECO:0007005"/>
    <property type="project" value="TAIR"/>
</dbReference>
<dbReference type="GO" id="GO:0005874">
    <property type="term" value="C:microtubule"/>
    <property type="evidence" value="ECO:0007669"/>
    <property type="project" value="UniProtKB-KW"/>
</dbReference>
<dbReference type="GO" id="GO:0045298">
    <property type="term" value="C:tubulin complex"/>
    <property type="evidence" value="ECO:0000250"/>
    <property type="project" value="TAIR"/>
</dbReference>
<dbReference type="GO" id="GO:0005525">
    <property type="term" value="F:GTP binding"/>
    <property type="evidence" value="ECO:0007669"/>
    <property type="project" value="UniProtKB-KW"/>
</dbReference>
<dbReference type="GO" id="GO:0003924">
    <property type="term" value="F:GTPase activity"/>
    <property type="evidence" value="ECO:0007669"/>
    <property type="project" value="InterPro"/>
</dbReference>
<dbReference type="GO" id="GO:0046872">
    <property type="term" value="F:metal ion binding"/>
    <property type="evidence" value="ECO:0007669"/>
    <property type="project" value="UniProtKB-KW"/>
</dbReference>
<dbReference type="GO" id="GO:0003729">
    <property type="term" value="F:mRNA binding"/>
    <property type="evidence" value="ECO:0000314"/>
    <property type="project" value="TAIR"/>
</dbReference>
<dbReference type="GO" id="GO:0005200">
    <property type="term" value="F:structural constituent of cytoskeleton"/>
    <property type="evidence" value="ECO:0000250"/>
    <property type="project" value="TAIR"/>
</dbReference>
<dbReference type="GO" id="GO:0007017">
    <property type="term" value="P:microtubule-based process"/>
    <property type="evidence" value="ECO:0000250"/>
    <property type="project" value="TAIR"/>
</dbReference>
<dbReference type="CDD" id="cd02187">
    <property type="entry name" value="beta_tubulin"/>
    <property type="match status" value="1"/>
</dbReference>
<dbReference type="FunFam" id="1.10.287.600:FF:000002">
    <property type="entry name" value="Tubulin beta chain"/>
    <property type="match status" value="1"/>
</dbReference>
<dbReference type="FunFam" id="3.30.1330.20:FF:000002">
    <property type="entry name" value="Tubulin beta chain"/>
    <property type="match status" value="1"/>
</dbReference>
<dbReference type="FunFam" id="3.40.50.1440:FF:000005">
    <property type="entry name" value="Tubulin beta chain"/>
    <property type="match status" value="1"/>
</dbReference>
<dbReference type="Gene3D" id="1.10.287.600">
    <property type="entry name" value="Helix hairpin bin"/>
    <property type="match status" value="1"/>
</dbReference>
<dbReference type="Gene3D" id="3.30.1330.20">
    <property type="entry name" value="Tubulin/FtsZ, C-terminal domain"/>
    <property type="match status" value="1"/>
</dbReference>
<dbReference type="Gene3D" id="3.40.50.1440">
    <property type="entry name" value="Tubulin/FtsZ, GTPase domain"/>
    <property type="match status" value="1"/>
</dbReference>
<dbReference type="InterPro" id="IPR013838">
    <property type="entry name" value="Beta-tubulin_BS"/>
</dbReference>
<dbReference type="InterPro" id="IPR002453">
    <property type="entry name" value="Beta_tubulin"/>
</dbReference>
<dbReference type="InterPro" id="IPR008280">
    <property type="entry name" value="Tub_FtsZ_C"/>
</dbReference>
<dbReference type="InterPro" id="IPR000217">
    <property type="entry name" value="Tubulin"/>
</dbReference>
<dbReference type="InterPro" id="IPR037103">
    <property type="entry name" value="Tubulin/FtsZ-like_C"/>
</dbReference>
<dbReference type="InterPro" id="IPR018316">
    <property type="entry name" value="Tubulin/FtsZ_2-layer-sand-dom"/>
</dbReference>
<dbReference type="InterPro" id="IPR036525">
    <property type="entry name" value="Tubulin/FtsZ_GTPase_sf"/>
</dbReference>
<dbReference type="InterPro" id="IPR023123">
    <property type="entry name" value="Tubulin_C"/>
</dbReference>
<dbReference type="InterPro" id="IPR017975">
    <property type="entry name" value="Tubulin_CS"/>
</dbReference>
<dbReference type="InterPro" id="IPR003008">
    <property type="entry name" value="Tubulin_FtsZ_GTPase"/>
</dbReference>
<dbReference type="PANTHER" id="PTHR11588">
    <property type="entry name" value="TUBULIN"/>
    <property type="match status" value="1"/>
</dbReference>
<dbReference type="Pfam" id="PF00091">
    <property type="entry name" value="Tubulin"/>
    <property type="match status" value="1"/>
</dbReference>
<dbReference type="Pfam" id="PF03953">
    <property type="entry name" value="Tubulin_C"/>
    <property type="match status" value="1"/>
</dbReference>
<dbReference type="PRINTS" id="PR01163">
    <property type="entry name" value="BETATUBULIN"/>
</dbReference>
<dbReference type="PRINTS" id="PR01161">
    <property type="entry name" value="TUBULIN"/>
</dbReference>
<dbReference type="SMART" id="SM00864">
    <property type="entry name" value="Tubulin"/>
    <property type="match status" value="1"/>
</dbReference>
<dbReference type="SMART" id="SM00865">
    <property type="entry name" value="Tubulin_C"/>
    <property type="match status" value="1"/>
</dbReference>
<dbReference type="SUPFAM" id="SSF55307">
    <property type="entry name" value="Tubulin C-terminal domain-like"/>
    <property type="match status" value="1"/>
</dbReference>
<dbReference type="SUPFAM" id="SSF52490">
    <property type="entry name" value="Tubulin nucleotide-binding domain-like"/>
    <property type="match status" value="1"/>
</dbReference>
<dbReference type="PROSITE" id="PS00227">
    <property type="entry name" value="TUBULIN"/>
    <property type="match status" value="1"/>
</dbReference>
<dbReference type="PROSITE" id="PS00228">
    <property type="entry name" value="TUBULIN_B_AUTOREG"/>
    <property type="match status" value="1"/>
</dbReference>
<organism>
    <name type="scientific">Arabidopsis thaliana</name>
    <name type="common">Mouse-ear cress</name>
    <dbReference type="NCBI Taxonomy" id="3702"/>
    <lineage>
        <taxon>Eukaryota</taxon>
        <taxon>Viridiplantae</taxon>
        <taxon>Streptophyta</taxon>
        <taxon>Embryophyta</taxon>
        <taxon>Tracheophyta</taxon>
        <taxon>Spermatophyta</taxon>
        <taxon>Magnoliopsida</taxon>
        <taxon>eudicotyledons</taxon>
        <taxon>Gunneridae</taxon>
        <taxon>Pentapetalae</taxon>
        <taxon>rosids</taxon>
        <taxon>malvids</taxon>
        <taxon>Brassicales</taxon>
        <taxon>Brassicaceae</taxon>
        <taxon>Camelineae</taxon>
        <taxon>Arabidopsis</taxon>
    </lineage>
</organism>
<feature type="chain" id="PRO_0000048327" description="Tubulin beta-8 chain">
    <location>
        <begin position="1"/>
        <end position="449"/>
    </location>
</feature>
<feature type="region of interest" description="Disordered" evidence="3">
    <location>
        <begin position="428"/>
        <end position="449"/>
    </location>
</feature>
<feature type="compositionally biased region" description="Acidic residues" evidence="3">
    <location>
        <begin position="429"/>
        <end position="449"/>
    </location>
</feature>
<feature type="binding site" evidence="2">
    <location>
        <position position="11"/>
    </location>
    <ligand>
        <name>GTP</name>
        <dbReference type="ChEBI" id="CHEBI:37565"/>
    </ligand>
</feature>
<feature type="binding site" evidence="1">
    <location>
        <position position="69"/>
    </location>
    <ligand>
        <name>GTP</name>
        <dbReference type="ChEBI" id="CHEBI:37565"/>
    </ligand>
</feature>
<feature type="binding site" evidence="1">
    <location>
        <position position="69"/>
    </location>
    <ligand>
        <name>Mg(2+)</name>
        <dbReference type="ChEBI" id="CHEBI:18420"/>
    </ligand>
</feature>
<feature type="binding site" evidence="2">
    <location>
        <position position="138"/>
    </location>
    <ligand>
        <name>GTP</name>
        <dbReference type="ChEBI" id="CHEBI:37565"/>
    </ligand>
</feature>
<feature type="binding site" evidence="2">
    <location>
        <position position="142"/>
    </location>
    <ligand>
        <name>GTP</name>
        <dbReference type="ChEBI" id="CHEBI:37565"/>
    </ligand>
</feature>
<feature type="binding site" evidence="2">
    <location>
        <position position="143"/>
    </location>
    <ligand>
        <name>GTP</name>
        <dbReference type="ChEBI" id="CHEBI:37565"/>
    </ligand>
</feature>
<feature type="binding site" evidence="2">
    <location>
        <position position="144"/>
    </location>
    <ligand>
        <name>GTP</name>
        <dbReference type="ChEBI" id="CHEBI:37565"/>
    </ligand>
</feature>
<feature type="binding site" evidence="2">
    <location>
        <position position="204"/>
    </location>
    <ligand>
        <name>GTP</name>
        <dbReference type="ChEBI" id="CHEBI:37565"/>
    </ligand>
</feature>
<feature type="binding site" evidence="2">
    <location>
        <position position="226"/>
    </location>
    <ligand>
        <name>GTP</name>
        <dbReference type="ChEBI" id="CHEBI:37565"/>
    </ligand>
</feature>
<feature type="sequence conflict" description="In Ref. 4; AAM10035/AAK96884." evidence="4" ref="4">
    <original>N</original>
    <variation>K</variation>
    <location>
        <position position="40"/>
    </location>
</feature>
<feature type="sequence conflict" description="In Ref. 1; AAA32886." evidence="4" ref="1">
    <original>A</original>
    <variation>R</variation>
    <location>
        <position position="124"/>
    </location>
</feature>
<feature type="sequence conflict" description="In Ref. 1; AAA32886." evidence="4" ref="1">
    <original>ML</original>
    <variation>IV</variation>
    <location>
        <begin position="164"/>
        <end position="165"/>
    </location>
</feature>
<feature type="sequence conflict" description="In Ref. 1; AAA32886." evidence="4" ref="1">
    <original>F</original>
    <variation>I</variation>
    <location>
        <position position="170"/>
    </location>
</feature>
<protein>
    <recommendedName>
        <fullName>Tubulin beta-8 chain</fullName>
    </recommendedName>
    <alternativeName>
        <fullName>Beta-8-tubulin</fullName>
    </alternativeName>
</protein>
<evidence type="ECO:0000250" key="1">
    <source>
        <dbReference type="UniProtKB" id="P68363"/>
    </source>
</evidence>
<evidence type="ECO:0000250" key="2">
    <source>
        <dbReference type="UniProtKB" id="Q13509"/>
    </source>
</evidence>
<evidence type="ECO:0000256" key="3">
    <source>
        <dbReference type="SAM" id="MobiDB-lite"/>
    </source>
</evidence>
<evidence type="ECO:0000305" key="4"/>
<accession>P29516</accession>
<accession>Q93Y15</accession>
<accession>Q9FF94</accession>
<comment type="function">
    <text>Tubulin is the major constituent of microtubules, a cylinder consisting of laterally associated linear protofilaments composed of alpha- and beta-tubulin heterodimers. Microtubules grow by the addition of GTP-tubulin dimers to the microtubule end, where a stabilizing cap forms. Below the cap, tubulin dimers are in GDP-bound state, owing to GTPase activity of alpha-tubulin.</text>
</comment>
<comment type="cofactor">
    <cofactor evidence="1">
        <name>Mg(2+)</name>
        <dbReference type="ChEBI" id="CHEBI:18420"/>
    </cofactor>
</comment>
<comment type="subunit">
    <text>Dimer of alpha and beta chains. A typical microtubule is a hollow water-filled tube with an outer diameter of 25 nm and an inner diameter of 15 nM. Alpha-beta heterodimers associate head-to-tail to form protofilaments running lengthwise along the microtubule wall with the beta-tubulin subunit facing the microtubule plus end conferring a structural polarity. Microtubules usually have 13 protofilaments but different protofilament numbers can be found in some organisms and specialized cells.</text>
</comment>
<comment type="subcellular location">
    <subcellularLocation>
        <location>Cytoplasm</location>
        <location>Cytoskeleton</location>
    </subcellularLocation>
</comment>
<comment type="miscellaneous">
    <text>There are nine genes coding for beta-tubulin.</text>
</comment>
<comment type="similarity">
    <text evidence="4">Belongs to the tubulin family.</text>
</comment>
<keyword id="KW-0963">Cytoplasm</keyword>
<keyword id="KW-0206">Cytoskeleton</keyword>
<keyword id="KW-0342">GTP-binding</keyword>
<keyword id="KW-0460">Magnesium</keyword>
<keyword id="KW-0479">Metal-binding</keyword>
<keyword id="KW-0493">Microtubule</keyword>
<keyword id="KW-0547">Nucleotide-binding</keyword>
<keyword id="KW-1185">Reference proteome</keyword>
<reference key="1">
    <citation type="journal article" date="1992" name="Plant Cell">
        <title>The small genome of Arabidopsis contains at least nine expressed beta-tubulin genes.</title>
        <authorList>
            <person name="Snustad D.P."/>
            <person name="Haas N.A."/>
            <person name="Kopczak S.D."/>
            <person name="Silflow C.D."/>
        </authorList>
    </citation>
    <scope>NUCLEOTIDE SEQUENCE [GENOMIC DNA]</scope>
    <source>
        <strain>cv. Columbia</strain>
    </source>
</reference>
<reference key="2">
    <citation type="journal article" date="1997" name="DNA Res.">
        <title>Structural analysis of Arabidopsis thaliana chromosome 5. I. Sequence features of the 1.6 Mb regions covered by twenty physically assigned P1 clones.</title>
        <authorList>
            <person name="Sato S."/>
            <person name="Kotani H."/>
            <person name="Nakamura Y."/>
            <person name="Kaneko T."/>
            <person name="Asamizu E."/>
            <person name="Fukami M."/>
            <person name="Miyajima N."/>
            <person name="Tabata S."/>
        </authorList>
    </citation>
    <scope>NUCLEOTIDE SEQUENCE [LARGE SCALE GENOMIC DNA]</scope>
    <source>
        <strain>cv. Columbia</strain>
    </source>
</reference>
<reference key="3">
    <citation type="journal article" date="2017" name="Plant J.">
        <title>Araport11: a complete reannotation of the Arabidopsis thaliana reference genome.</title>
        <authorList>
            <person name="Cheng C.Y."/>
            <person name="Krishnakumar V."/>
            <person name="Chan A.P."/>
            <person name="Thibaud-Nissen F."/>
            <person name="Schobel S."/>
            <person name="Town C.D."/>
        </authorList>
    </citation>
    <scope>GENOME REANNOTATION</scope>
    <source>
        <strain>cv. Columbia</strain>
    </source>
</reference>
<reference key="4">
    <citation type="journal article" date="2003" name="Science">
        <title>Empirical analysis of transcriptional activity in the Arabidopsis genome.</title>
        <authorList>
            <person name="Yamada K."/>
            <person name="Lim J."/>
            <person name="Dale J.M."/>
            <person name="Chen H."/>
            <person name="Shinn P."/>
            <person name="Palm C.J."/>
            <person name="Southwick A.M."/>
            <person name="Wu H.C."/>
            <person name="Kim C.J."/>
            <person name="Nguyen M."/>
            <person name="Pham P.K."/>
            <person name="Cheuk R.F."/>
            <person name="Karlin-Newmann G."/>
            <person name="Liu S.X."/>
            <person name="Lam B."/>
            <person name="Sakano H."/>
            <person name="Wu T."/>
            <person name="Yu G."/>
            <person name="Miranda M."/>
            <person name="Quach H.L."/>
            <person name="Tripp M."/>
            <person name="Chang C.H."/>
            <person name="Lee J.M."/>
            <person name="Toriumi M.J."/>
            <person name="Chan M.M."/>
            <person name="Tang C.C."/>
            <person name="Onodera C.S."/>
            <person name="Deng J.M."/>
            <person name="Akiyama K."/>
            <person name="Ansari Y."/>
            <person name="Arakawa T."/>
            <person name="Banh J."/>
            <person name="Banno F."/>
            <person name="Bowser L."/>
            <person name="Brooks S.Y."/>
            <person name="Carninci P."/>
            <person name="Chao Q."/>
            <person name="Choy N."/>
            <person name="Enju A."/>
            <person name="Goldsmith A.D."/>
            <person name="Gurjal M."/>
            <person name="Hansen N.F."/>
            <person name="Hayashizaki Y."/>
            <person name="Johnson-Hopson C."/>
            <person name="Hsuan V.W."/>
            <person name="Iida K."/>
            <person name="Karnes M."/>
            <person name="Khan S."/>
            <person name="Koesema E."/>
            <person name="Ishida J."/>
            <person name="Jiang P.X."/>
            <person name="Jones T."/>
            <person name="Kawai J."/>
            <person name="Kamiya A."/>
            <person name="Meyers C."/>
            <person name="Nakajima M."/>
            <person name="Narusaka M."/>
            <person name="Seki M."/>
            <person name="Sakurai T."/>
            <person name="Satou M."/>
            <person name="Tamse R."/>
            <person name="Vaysberg M."/>
            <person name="Wallender E.K."/>
            <person name="Wong C."/>
            <person name="Yamamura Y."/>
            <person name="Yuan S."/>
            <person name="Shinozaki K."/>
            <person name="Davis R.W."/>
            <person name="Theologis A."/>
            <person name="Ecker J.R."/>
        </authorList>
    </citation>
    <scope>NUCLEOTIDE SEQUENCE [LARGE SCALE MRNA]</scope>
    <source>
        <strain>cv. Columbia</strain>
    </source>
</reference>
<sequence length="449" mass="50607">MREILHIQGGQCGNQIGAKFWEVVCAEHGIDSTGRYQGENDLQLERVNVYYNEASCGRFVPRAVLMDLEPGTMDSVRSGPYGQIFRPDNFVFGQSGAGNNWAKGHYTEGAELIDSVLDVVRKEAENCDCLQGFQVCHSLGGGTGSGMGTLLISKIREEYPDRMMLTFSVFPSPKVSDTVVEPYNATLSVHQLVENADECMVLDNEALYDICFRTLKLTTPSFGDLNHLISATMSGVTCCLRFPGQLNSDLRKLAVNLIPFPRLHFFMVGFAPLTSRGSQQYRALTVPELTQQMWDAKNMMCAADPRHGRYLTASAMFRGKMSTKEVDEQMINVQNKNSSYFVEWIPNNVKSTVCDIPPTGLKMASTFIGNSTSIQEMFRRVSEQFTAMFRRKAFLHWYTGEGMDEMEFTEAESNMNDLVSEYQQYQDATADEEEGYEYEEDEVEVQEEQ</sequence>
<name>TBB8_ARATH</name>